<evidence type="ECO:0000255" key="1">
    <source>
        <dbReference type="HAMAP-Rule" id="MF_00435"/>
    </source>
</evidence>
<evidence type="ECO:0000255" key="2">
    <source>
        <dbReference type="PROSITE-ProRule" id="PRU01197"/>
    </source>
</evidence>
<evidence type="ECO:0000255" key="3">
    <source>
        <dbReference type="PROSITE-ProRule" id="PRU01198"/>
    </source>
</evidence>
<sequence>MAITVYYDKDCDLNLIKSKKVAIIGFGSQGHAHAMNLRDNGVNVIIGLREGSVSAVKAKNAGFEVMSVSEASKTADVVMILAPDEIQADIFNVEIKPNLSEGKAIAFAHGFNIHYGQIVAPKGIDVIMIAPKAPGHTVRNEFTLGGGTPCLIAIHQDESKNAKNLALSYASAIGGGRTGIIETTFKAETETDLFGEQAVLCGGLSALIQAGFETLVEAGYEPEMAYFECLHEMKLIVDLIYQGGIADMRYSISNTAEYGDYITGPKIVTEETKKAMKGVLKDIQNGVFAKDFILERRAGFARMHAERKNMNDSLIEKTGRNLRAMMPWISAKKLVDKDKN</sequence>
<proteinExistence type="inferred from homology"/>
<protein>
    <recommendedName>
        <fullName evidence="1">Ketol-acid reductoisomerase (NADP(+))</fullName>
        <shortName evidence="1">KARI</shortName>
        <ecNumber evidence="1">1.1.1.86</ecNumber>
    </recommendedName>
    <alternativeName>
        <fullName evidence="1">Acetohydroxy-acid isomeroreductase</fullName>
        <shortName evidence="1">AHIR</shortName>
    </alternativeName>
    <alternativeName>
        <fullName evidence="1">Alpha-keto-beta-hydroxylacyl reductoisomerase</fullName>
    </alternativeName>
    <alternativeName>
        <fullName evidence="1">Ketol-acid reductoisomerase type 1</fullName>
    </alternativeName>
    <alternativeName>
        <fullName evidence="1">Ketol-acid reductoisomerase type I</fullName>
    </alternativeName>
</protein>
<organism>
    <name type="scientific">Campylobacter jejuni subsp. jejuni serotype O:23/36 (strain 81-176)</name>
    <dbReference type="NCBI Taxonomy" id="354242"/>
    <lineage>
        <taxon>Bacteria</taxon>
        <taxon>Pseudomonadati</taxon>
        <taxon>Campylobacterota</taxon>
        <taxon>Epsilonproteobacteria</taxon>
        <taxon>Campylobacterales</taxon>
        <taxon>Campylobacteraceae</taxon>
        <taxon>Campylobacter</taxon>
    </lineage>
</organism>
<name>ILVC_CAMJJ</name>
<reference key="1">
    <citation type="submission" date="2006-12" db="EMBL/GenBank/DDBJ databases">
        <authorList>
            <person name="Fouts D.E."/>
            <person name="Nelson K.E."/>
            <person name="Sebastian Y."/>
        </authorList>
    </citation>
    <scope>NUCLEOTIDE SEQUENCE [LARGE SCALE GENOMIC DNA]</scope>
    <source>
        <strain>81-176</strain>
    </source>
</reference>
<dbReference type="EC" id="1.1.1.86" evidence="1"/>
<dbReference type="EMBL" id="CP000538">
    <property type="protein sequence ID" value="EAQ73148.1"/>
    <property type="molecule type" value="Genomic_DNA"/>
</dbReference>
<dbReference type="RefSeq" id="WP_002857064.1">
    <property type="nucleotide sequence ID" value="NC_008787.1"/>
</dbReference>
<dbReference type="SMR" id="A1VYZ2"/>
<dbReference type="KEGG" id="cjj:CJJ81176_0660"/>
<dbReference type="eggNOG" id="COG0059">
    <property type="taxonomic scope" value="Bacteria"/>
</dbReference>
<dbReference type="HOGENOM" id="CLU_033821_0_1_7"/>
<dbReference type="UniPathway" id="UPA00047">
    <property type="reaction ID" value="UER00056"/>
</dbReference>
<dbReference type="UniPathway" id="UPA00049">
    <property type="reaction ID" value="UER00060"/>
</dbReference>
<dbReference type="Proteomes" id="UP000000646">
    <property type="component" value="Chromosome"/>
</dbReference>
<dbReference type="GO" id="GO:0005829">
    <property type="term" value="C:cytosol"/>
    <property type="evidence" value="ECO:0007669"/>
    <property type="project" value="TreeGrafter"/>
</dbReference>
<dbReference type="GO" id="GO:0004455">
    <property type="term" value="F:ketol-acid reductoisomerase activity"/>
    <property type="evidence" value="ECO:0007669"/>
    <property type="project" value="UniProtKB-UniRule"/>
</dbReference>
<dbReference type="GO" id="GO:0000287">
    <property type="term" value="F:magnesium ion binding"/>
    <property type="evidence" value="ECO:0007669"/>
    <property type="project" value="UniProtKB-UniRule"/>
</dbReference>
<dbReference type="GO" id="GO:0050661">
    <property type="term" value="F:NADP binding"/>
    <property type="evidence" value="ECO:0007669"/>
    <property type="project" value="InterPro"/>
</dbReference>
<dbReference type="GO" id="GO:0009097">
    <property type="term" value="P:isoleucine biosynthetic process"/>
    <property type="evidence" value="ECO:0007669"/>
    <property type="project" value="UniProtKB-UniRule"/>
</dbReference>
<dbReference type="GO" id="GO:0009099">
    <property type="term" value="P:L-valine biosynthetic process"/>
    <property type="evidence" value="ECO:0007669"/>
    <property type="project" value="UniProtKB-UniRule"/>
</dbReference>
<dbReference type="FunFam" id="3.40.50.720:FF:000023">
    <property type="entry name" value="Ketol-acid reductoisomerase (NADP(+))"/>
    <property type="match status" value="1"/>
</dbReference>
<dbReference type="Gene3D" id="6.10.240.10">
    <property type="match status" value="1"/>
</dbReference>
<dbReference type="Gene3D" id="3.40.50.720">
    <property type="entry name" value="NAD(P)-binding Rossmann-like Domain"/>
    <property type="match status" value="1"/>
</dbReference>
<dbReference type="HAMAP" id="MF_00435">
    <property type="entry name" value="IlvC"/>
    <property type="match status" value="1"/>
</dbReference>
<dbReference type="InterPro" id="IPR008927">
    <property type="entry name" value="6-PGluconate_DH-like_C_sf"/>
</dbReference>
<dbReference type="InterPro" id="IPR013023">
    <property type="entry name" value="KARI"/>
</dbReference>
<dbReference type="InterPro" id="IPR000506">
    <property type="entry name" value="KARI_C"/>
</dbReference>
<dbReference type="InterPro" id="IPR013116">
    <property type="entry name" value="KARI_N"/>
</dbReference>
<dbReference type="InterPro" id="IPR014359">
    <property type="entry name" value="KARI_prok"/>
</dbReference>
<dbReference type="InterPro" id="IPR036291">
    <property type="entry name" value="NAD(P)-bd_dom_sf"/>
</dbReference>
<dbReference type="NCBIfam" id="TIGR00465">
    <property type="entry name" value="ilvC"/>
    <property type="match status" value="1"/>
</dbReference>
<dbReference type="NCBIfam" id="NF004017">
    <property type="entry name" value="PRK05479.1"/>
    <property type="match status" value="1"/>
</dbReference>
<dbReference type="NCBIfam" id="NF009940">
    <property type="entry name" value="PRK13403.1"/>
    <property type="match status" value="1"/>
</dbReference>
<dbReference type="PANTHER" id="PTHR21371">
    <property type="entry name" value="KETOL-ACID REDUCTOISOMERASE, MITOCHONDRIAL"/>
    <property type="match status" value="1"/>
</dbReference>
<dbReference type="PANTHER" id="PTHR21371:SF1">
    <property type="entry name" value="KETOL-ACID REDUCTOISOMERASE, MITOCHONDRIAL"/>
    <property type="match status" value="1"/>
</dbReference>
<dbReference type="Pfam" id="PF01450">
    <property type="entry name" value="KARI_C"/>
    <property type="match status" value="1"/>
</dbReference>
<dbReference type="Pfam" id="PF07991">
    <property type="entry name" value="KARI_N"/>
    <property type="match status" value="1"/>
</dbReference>
<dbReference type="PIRSF" id="PIRSF000116">
    <property type="entry name" value="IlvC_gammaproteo"/>
    <property type="match status" value="1"/>
</dbReference>
<dbReference type="SUPFAM" id="SSF48179">
    <property type="entry name" value="6-phosphogluconate dehydrogenase C-terminal domain-like"/>
    <property type="match status" value="1"/>
</dbReference>
<dbReference type="SUPFAM" id="SSF51735">
    <property type="entry name" value="NAD(P)-binding Rossmann-fold domains"/>
    <property type="match status" value="1"/>
</dbReference>
<dbReference type="PROSITE" id="PS51851">
    <property type="entry name" value="KARI_C"/>
    <property type="match status" value="1"/>
</dbReference>
<dbReference type="PROSITE" id="PS51850">
    <property type="entry name" value="KARI_N"/>
    <property type="match status" value="1"/>
</dbReference>
<feature type="chain" id="PRO_1000050498" description="Ketol-acid reductoisomerase (NADP(+))">
    <location>
        <begin position="1"/>
        <end position="340"/>
    </location>
</feature>
<feature type="domain" description="KARI N-terminal Rossmann" evidence="2">
    <location>
        <begin position="1"/>
        <end position="183"/>
    </location>
</feature>
<feature type="domain" description="KARI C-terminal knotted" evidence="3">
    <location>
        <begin position="184"/>
        <end position="329"/>
    </location>
</feature>
<feature type="active site" evidence="1">
    <location>
        <position position="109"/>
    </location>
</feature>
<feature type="binding site" evidence="1">
    <location>
        <begin position="26"/>
        <end position="29"/>
    </location>
    <ligand>
        <name>NADP(+)</name>
        <dbReference type="ChEBI" id="CHEBI:58349"/>
    </ligand>
</feature>
<feature type="binding site" evidence="1">
    <location>
        <position position="49"/>
    </location>
    <ligand>
        <name>NADP(+)</name>
        <dbReference type="ChEBI" id="CHEBI:58349"/>
    </ligand>
</feature>
<feature type="binding site" evidence="1">
    <location>
        <position position="52"/>
    </location>
    <ligand>
        <name>NADP(+)</name>
        <dbReference type="ChEBI" id="CHEBI:58349"/>
    </ligand>
</feature>
<feature type="binding site" evidence="1">
    <location>
        <position position="54"/>
    </location>
    <ligand>
        <name>NADP(+)</name>
        <dbReference type="ChEBI" id="CHEBI:58349"/>
    </ligand>
</feature>
<feature type="binding site" evidence="1">
    <location>
        <begin position="84"/>
        <end position="87"/>
    </location>
    <ligand>
        <name>NADP(+)</name>
        <dbReference type="ChEBI" id="CHEBI:58349"/>
    </ligand>
</feature>
<feature type="binding site" evidence="1">
    <location>
        <position position="135"/>
    </location>
    <ligand>
        <name>NADP(+)</name>
        <dbReference type="ChEBI" id="CHEBI:58349"/>
    </ligand>
</feature>
<feature type="binding site" evidence="1">
    <location>
        <position position="192"/>
    </location>
    <ligand>
        <name>Mg(2+)</name>
        <dbReference type="ChEBI" id="CHEBI:18420"/>
        <label>1</label>
    </ligand>
</feature>
<feature type="binding site" evidence="1">
    <location>
        <position position="192"/>
    </location>
    <ligand>
        <name>Mg(2+)</name>
        <dbReference type="ChEBI" id="CHEBI:18420"/>
        <label>2</label>
    </ligand>
</feature>
<feature type="binding site" evidence="1">
    <location>
        <position position="196"/>
    </location>
    <ligand>
        <name>Mg(2+)</name>
        <dbReference type="ChEBI" id="CHEBI:18420"/>
        <label>1</label>
    </ligand>
</feature>
<feature type="binding site" evidence="1">
    <location>
        <position position="228"/>
    </location>
    <ligand>
        <name>Mg(2+)</name>
        <dbReference type="ChEBI" id="CHEBI:18420"/>
        <label>2</label>
    </ligand>
</feature>
<feature type="binding site" evidence="1">
    <location>
        <position position="232"/>
    </location>
    <ligand>
        <name>Mg(2+)</name>
        <dbReference type="ChEBI" id="CHEBI:18420"/>
        <label>2</label>
    </ligand>
</feature>
<feature type="binding site" evidence="1">
    <location>
        <position position="253"/>
    </location>
    <ligand>
        <name>substrate</name>
    </ligand>
</feature>
<comment type="function">
    <text evidence="1">Involved in the biosynthesis of branched-chain amino acids (BCAA). Catalyzes an alkyl-migration followed by a ketol-acid reduction of (S)-2-acetolactate (S2AL) to yield (R)-2,3-dihydroxy-isovalerate. In the isomerase reaction, S2AL is rearranged via a Mg-dependent methyl migration to produce 3-hydroxy-3-methyl-2-ketobutyrate (HMKB). In the reductase reaction, this 2-ketoacid undergoes a metal-dependent reduction by NADPH to yield (R)-2,3-dihydroxy-isovalerate.</text>
</comment>
<comment type="catalytic activity">
    <reaction evidence="1">
        <text>(2R)-2,3-dihydroxy-3-methylbutanoate + NADP(+) = (2S)-2-acetolactate + NADPH + H(+)</text>
        <dbReference type="Rhea" id="RHEA:22068"/>
        <dbReference type="ChEBI" id="CHEBI:15378"/>
        <dbReference type="ChEBI" id="CHEBI:49072"/>
        <dbReference type="ChEBI" id="CHEBI:57783"/>
        <dbReference type="ChEBI" id="CHEBI:58349"/>
        <dbReference type="ChEBI" id="CHEBI:58476"/>
        <dbReference type="EC" id="1.1.1.86"/>
    </reaction>
</comment>
<comment type="catalytic activity">
    <reaction evidence="1">
        <text>(2R,3R)-2,3-dihydroxy-3-methylpentanoate + NADP(+) = (S)-2-ethyl-2-hydroxy-3-oxobutanoate + NADPH + H(+)</text>
        <dbReference type="Rhea" id="RHEA:13493"/>
        <dbReference type="ChEBI" id="CHEBI:15378"/>
        <dbReference type="ChEBI" id="CHEBI:49256"/>
        <dbReference type="ChEBI" id="CHEBI:49258"/>
        <dbReference type="ChEBI" id="CHEBI:57783"/>
        <dbReference type="ChEBI" id="CHEBI:58349"/>
        <dbReference type="EC" id="1.1.1.86"/>
    </reaction>
</comment>
<comment type="cofactor">
    <cofactor evidence="1">
        <name>Mg(2+)</name>
        <dbReference type="ChEBI" id="CHEBI:18420"/>
    </cofactor>
    <text evidence="1">Binds 2 magnesium ions per subunit.</text>
</comment>
<comment type="pathway">
    <text evidence="1">Amino-acid biosynthesis; L-isoleucine biosynthesis; L-isoleucine from 2-oxobutanoate: step 2/4.</text>
</comment>
<comment type="pathway">
    <text evidence="1">Amino-acid biosynthesis; L-valine biosynthesis; L-valine from pyruvate: step 2/4.</text>
</comment>
<comment type="similarity">
    <text evidence="1">Belongs to the ketol-acid reductoisomerase family.</text>
</comment>
<accession>A1VYZ2</accession>
<keyword id="KW-0028">Amino-acid biosynthesis</keyword>
<keyword id="KW-0100">Branched-chain amino acid biosynthesis</keyword>
<keyword id="KW-0460">Magnesium</keyword>
<keyword id="KW-0479">Metal-binding</keyword>
<keyword id="KW-0521">NADP</keyword>
<keyword id="KW-0560">Oxidoreductase</keyword>
<gene>
    <name evidence="1" type="primary">ilvC</name>
    <name type="ordered locus">CJJ81176_0660</name>
</gene>